<keyword id="KW-0071">Autoinducer synthesis</keyword>
<keyword id="KW-0408">Iron</keyword>
<keyword id="KW-0456">Lyase</keyword>
<keyword id="KW-0479">Metal-binding</keyword>
<keyword id="KW-0673">Quorum sensing</keyword>
<keyword id="KW-1185">Reference proteome</keyword>
<accession>A3D134</accession>
<proteinExistence type="inferred from homology"/>
<comment type="function">
    <text evidence="1">Involved in the synthesis of autoinducer 2 (AI-2) which is secreted by bacteria and is used to communicate both the cell density and the metabolic potential of the environment. The regulation of gene expression in response to changes in cell density is called quorum sensing. Catalyzes the transformation of S-ribosylhomocysteine (RHC) to homocysteine (HC) and 4,5-dihydroxy-2,3-pentadione (DPD).</text>
</comment>
<comment type="catalytic activity">
    <reaction evidence="1">
        <text>S-(5-deoxy-D-ribos-5-yl)-L-homocysteine = (S)-4,5-dihydroxypentane-2,3-dione + L-homocysteine</text>
        <dbReference type="Rhea" id="RHEA:17753"/>
        <dbReference type="ChEBI" id="CHEBI:29484"/>
        <dbReference type="ChEBI" id="CHEBI:58195"/>
        <dbReference type="ChEBI" id="CHEBI:58199"/>
        <dbReference type="EC" id="4.4.1.21"/>
    </reaction>
</comment>
<comment type="cofactor">
    <cofactor evidence="1">
        <name>Fe cation</name>
        <dbReference type="ChEBI" id="CHEBI:24875"/>
    </cofactor>
    <text evidence="1">Binds 1 Fe cation per subunit.</text>
</comment>
<comment type="subunit">
    <text evidence="1">Homodimer.</text>
</comment>
<comment type="similarity">
    <text evidence="1">Belongs to the LuxS family.</text>
</comment>
<protein>
    <recommendedName>
        <fullName evidence="1">S-ribosylhomocysteine lyase</fullName>
        <ecNumber evidence="1">4.4.1.21</ecNumber>
    </recommendedName>
    <alternativeName>
        <fullName evidence="1">AI-2 synthesis protein</fullName>
    </alternativeName>
    <alternativeName>
        <fullName evidence="1">Autoinducer-2 production protein LuxS</fullName>
    </alternativeName>
</protein>
<name>LUXS_SHEB5</name>
<organism>
    <name type="scientific">Shewanella baltica (strain OS155 / ATCC BAA-1091)</name>
    <dbReference type="NCBI Taxonomy" id="325240"/>
    <lineage>
        <taxon>Bacteria</taxon>
        <taxon>Pseudomonadati</taxon>
        <taxon>Pseudomonadota</taxon>
        <taxon>Gammaproteobacteria</taxon>
        <taxon>Alteromonadales</taxon>
        <taxon>Shewanellaceae</taxon>
        <taxon>Shewanella</taxon>
    </lineage>
</organism>
<sequence length="169" mass="18831">MPLLDSFTVDHTRMNAPAVRVAKHMSTPKGDAITVFDLRFCAPNKDILSERGIHTLEHLFAGFMRDHLNGSNVEIIDISPMGCRTGFYMSLIGEPTERQVADAWLAAMEDVLKVVEQSEIPELNEYQCGTYEMHSLEQAQDIARNIIAAGVSVNRNDDLKLSDEILGNL</sequence>
<dbReference type="EC" id="4.4.1.21" evidence="1"/>
<dbReference type="EMBL" id="CP000563">
    <property type="protein sequence ID" value="ABN60447.1"/>
    <property type="molecule type" value="Genomic_DNA"/>
</dbReference>
<dbReference type="RefSeq" id="WP_006080460.1">
    <property type="nucleotide sequence ID" value="NC_009052.1"/>
</dbReference>
<dbReference type="SMR" id="A3D134"/>
<dbReference type="STRING" id="325240.Sbal_0922"/>
<dbReference type="GeneID" id="11773601"/>
<dbReference type="KEGG" id="sbl:Sbal_0922"/>
<dbReference type="HOGENOM" id="CLU_107531_2_0_6"/>
<dbReference type="OrthoDB" id="9788129at2"/>
<dbReference type="Proteomes" id="UP000001557">
    <property type="component" value="Chromosome"/>
</dbReference>
<dbReference type="GO" id="GO:0005506">
    <property type="term" value="F:iron ion binding"/>
    <property type="evidence" value="ECO:0007669"/>
    <property type="project" value="InterPro"/>
</dbReference>
<dbReference type="GO" id="GO:0043768">
    <property type="term" value="F:S-ribosylhomocysteine lyase activity"/>
    <property type="evidence" value="ECO:0007669"/>
    <property type="project" value="UniProtKB-UniRule"/>
</dbReference>
<dbReference type="GO" id="GO:0009372">
    <property type="term" value="P:quorum sensing"/>
    <property type="evidence" value="ECO:0007669"/>
    <property type="project" value="UniProtKB-UniRule"/>
</dbReference>
<dbReference type="FunFam" id="3.30.1360.80:FF:000001">
    <property type="entry name" value="S-ribosylhomocysteine lyase"/>
    <property type="match status" value="1"/>
</dbReference>
<dbReference type="Gene3D" id="3.30.1360.80">
    <property type="entry name" value="S-ribosylhomocysteinase (LuxS)"/>
    <property type="match status" value="1"/>
</dbReference>
<dbReference type="HAMAP" id="MF_00091">
    <property type="entry name" value="LuxS"/>
    <property type="match status" value="1"/>
</dbReference>
<dbReference type="InterPro" id="IPR037005">
    <property type="entry name" value="LuxS_sf"/>
</dbReference>
<dbReference type="InterPro" id="IPR011249">
    <property type="entry name" value="Metalloenz_LuxS/M16"/>
</dbReference>
<dbReference type="InterPro" id="IPR003815">
    <property type="entry name" value="S-ribosylhomocysteinase"/>
</dbReference>
<dbReference type="NCBIfam" id="NF002602">
    <property type="entry name" value="PRK02260.1-2"/>
    <property type="match status" value="1"/>
</dbReference>
<dbReference type="PANTHER" id="PTHR35799">
    <property type="entry name" value="S-RIBOSYLHOMOCYSTEINE LYASE"/>
    <property type="match status" value="1"/>
</dbReference>
<dbReference type="PANTHER" id="PTHR35799:SF1">
    <property type="entry name" value="S-RIBOSYLHOMOCYSTEINE LYASE"/>
    <property type="match status" value="1"/>
</dbReference>
<dbReference type="Pfam" id="PF02664">
    <property type="entry name" value="LuxS"/>
    <property type="match status" value="1"/>
</dbReference>
<dbReference type="PIRSF" id="PIRSF006160">
    <property type="entry name" value="AI2"/>
    <property type="match status" value="1"/>
</dbReference>
<dbReference type="PRINTS" id="PR01487">
    <property type="entry name" value="LUXSPROTEIN"/>
</dbReference>
<dbReference type="SUPFAM" id="SSF63411">
    <property type="entry name" value="LuxS/MPP-like metallohydrolase"/>
    <property type="match status" value="1"/>
</dbReference>
<reference key="1">
    <citation type="submission" date="2007-02" db="EMBL/GenBank/DDBJ databases">
        <title>Complete sequence of chromosome of Shewanella baltica OS155.</title>
        <authorList>
            <consortium name="US DOE Joint Genome Institute"/>
            <person name="Copeland A."/>
            <person name="Lucas S."/>
            <person name="Lapidus A."/>
            <person name="Barry K."/>
            <person name="Detter J.C."/>
            <person name="Glavina del Rio T."/>
            <person name="Hammon N."/>
            <person name="Israni S."/>
            <person name="Dalin E."/>
            <person name="Tice H."/>
            <person name="Pitluck S."/>
            <person name="Sims D.R."/>
            <person name="Brettin T."/>
            <person name="Bruce D."/>
            <person name="Han C."/>
            <person name="Tapia R."/>
            <person name="Brainard J."/>
            <person name="Schmutz J."/>
            <person name="Larimer F."/>
            <person name="Land M."/>
            <person name="Hauser L."/>
            <person name="Kyrpides N."/>
            <person name="Mikhailova N."/>
            <person name="Brettar I."/>
            <person name="Klappenbach J."/>
            <person name="Konstantinidis K."/>
            <person name="Rodrigues J."/>
            <person name="Tiedje J."/>
            <person name="Richardson P."/>
        </authorList>
    </citation>
    <scope>NUCLEOTIDE SEQUENCE [LARGE SCALE GENOMIC DNA]</scope>
    <source>
        <strain>OS155 / ATCC BAA-1091</strain>
    </source>
</reference>
<evidence type="ECO:0000255" key="1">
    <source>
        <dbReference type="HAMAP-Rule" id="MF_00091"/>
    </source>
</evidence>
<gene>
    <name evidence="1" type="primary">luxS</name>
    <name type="ordered locus">Sbal_0922</name>
</gene>
<feature type="chain" id="PRO_1000004846" description="S-ribosylhomocysteine lyase">
    <location>
        <begin position="1"/>
        <end position="169"/>
    </location>
</feature>
<feature type="binding site" evidence="1">
    <location>
        <position position="54"/>
    </location>
    <ligand>
        <name>Fe cation</name>
        <dbReference type="ChEBI" id="CHEBI:24875"/>
    </ligand>
</feature>
<feature type="binding site" evidence="1">
    <location>
        <position position="58"/>
    </location>
    <ligand>
        <name>Fe cation</name>
        <dbReference type="ChEBI" id="CHEBI:24875"/>
    </ligand>
</feature>
<feature type="binding site" evidence="1">
    <location>
        <position position="128"/>
    </location>
    <ligand>
        <name>Fe cation</name>
        <dbReference type="ChEBI" id="CHEBI:24875"/>
    </ligand>
</feature>